<gene>
    <name type="primary">T85</name>
</gene>
<protein>
    <recommendedName>
        <fullName>Auxin-binding protein T85</fullName>
        <shortName>ABP</shortName>
    </recommendedName>
</protein>
<name>ABP1_TOBAC</name>
<organism>
    <name type="scientific">Nicotiana tabacum</name>
    <name type="common">Common tobacco</name>
    <dbReference type="NCBI Taxonomy" id="4097"/>
    <lineage>
        <taxon>Eukaryota</taxon>
        <taxon>Viridiplantae</taxon>
        <taxon>Streptophyta</taxon>
        <taxon>Embryophyta</taxon>
        <taxon>Tracheophyta</taxon>
        <taxon>Spermatophyta</taxon>
        <taxon>Magnoliopsida</taxon>
        <taxon>eudicotyledons</taxon>
        <taxon>Gunneridae</taxon>
        <taxon>Pentapetalae</taxon>
        <taxon>asterids</taxon>
        <taxon>lamiids</taxon>
        <taxon>Solanales</taxon>
        <taxon>Solanaceae</taxon>
        <taxon>Nicotianoideae</taxon>
        <taxon>Nicotianeae</taxon>
        <taxon>Nicotiana</taxon>
    </lineage>
</organism>
<sequence>MARHVLVVVAVLLFATAEASQCSINGLPLVRNISELPQENYGRSGLSHTTIAGSVLHGMKEIEVWLQTFAPGSRTPIHRHSCEEIFVVLKGQGILYLTPSSHSKYPGNPQEFHIFPNSTFHIPVNDVHQVWNTGEHEDLQVLVVISRPPVKVFMYDDWSMPHTAAKLKFPYYWDEECYQTTSWKDEL</sequence>
<dbReference type="EMBL" id="X70902">
    <property type="protein sequence ID" value="CAA50259.1"/>
    <property type="molecule type" value="Genomic_DNA"/>
</dbReference>
<dbReference type="PIR" id="S31835">
    <property type="entry name" value="S31835"/>
</dbReference>
<dbReference type="RefSeq" id="XP_016514804.1">
    <property type="nucleotide sequence ID" value="XM_016659318.1"/>
</dbReference>
<dbReference type="SMR" id="P33490"/>
<dbReference type="STRING" id="4097.P33490"/>
<dbReference type="GlyCosmos" id="P33490">
    <property type="glycosylation" value="1 site, No reported glycans"/>
</dbReference>
<dbReference type="PaxDb" id="4097-P33490"/>
<dbReference type="KEGG" id="nta:107831537"/>
<dbReference type="OMA" id="VWNTNEN"/>
<dbReference type="OrthoDB" id="2013851at2759"/>
<dbReference type="PhylomeDB" id="P33490"/>
<dbReference type="Proteomes" id="UP000084051">
    <property type="component" value="Unplaced"/>
</dbReference>
<dbReference type="GO" id="GO:0005788">
    <property type="term" value="C:endoplasmic reticulum lumen"/>
    <property type="evidence" value="ECO:0007669"/>
    <property type="project" value="UniProtKB-SubCell"/>
</dbReference>
<dbReference type="GO" id="GO:0010011">
    <property type="term" value="F:auxin binding"/>
    <property type="evidence" value="ECO:0000250"/>
    <property type="project" value="UniProtKB"/>
</dbReference>
<dbReference type="GO" id="GO:0008270">
    <property type="term" value="F:zinc ion binding"/>
    <property type="evidence" value="ECO:0000250"/>
    <property type="project" value="UniProtKB"/>
</dbReference>
<dbReference type="GO" id="GO:0009734">
    <property type="term" value="P:auxin-activated signaling pathway"/>
    <property type="evidence" value="ECO:0007669"/>
    <property type="project" value="UniProtKB-KW"/>
</dbReference>
<dbReference type="GO" id="GO:0000911">
    <property type="term" value="P:cytokinesis by cell plate formation"/>
    <property type="evidence" value="ECO:0000318"/>
    <property type="project" value="GO_Central"/>
</dbReference>
<dbReference type="GO" id="GO:0051781">
    <property type="term" value="P:positive regulation of cell division"/>
    <property type="evidence" value="ECO:0000318"/>
    <property type="project" value="GO_Central"/>
</dbReference>
<dbReference type="GO" id="GO:0045793">
    <property type="term" value="P:positive regulation of cell size"/>
    <property type="evidence" value="ECO:0000318"/>
    <property type="project" value="GO_Central"/>
</dbReference>
<dbReference type="GO" id="GO:0032877">
    <property type="term" value="P:positive regulation of DNA endoreduplication"/>
    <property type="evidence" value="ECO:0000318"/>
    <property type="project" value="GO_Central"/>
</dbReference>
<dbReference type="GO" id="GO:0009826">
    <property type="term" value="P:unidimensional cell growth"/>
    <property type="evidence" value="ECO:0000318"/>
    <property type="project" value="GO_Central"/>
</dbReference>
<dbReference type="CDD" id="cd02220">
    <property type="entry name" value="cupin_ABP1"/>
    <property type="match status" value="1"/>
</dbReference>
<dbReference type="FunFam" id="2.60.120.10:FF:000080">
    <property type="entry name" value="Auxin-binding protein 1"/>
    <property type="match status" value="1"/>
</dbReference>
<dbReference type="Gene3D" id="2.60.120.10">
    <property type="entry name" value="Jelly Rolls"/>
    <property type="match status" value="1"/>
</dbReference>
<dbReference type="InterPro" id="IPR000526">
    <property type="entry name" value="Auxin-bd"/>
</dbReference>
<dbReference type="InterPro" id="IPR014710">
    <property type="entry name" value="RmlC-like_jellyroll"/>
</dbReference>
<dbReference type="InterPro" id="IPR011051">
    <property type="entry name" value="RmlC_Cupin_sf"/>
</dbReference>
<dbReference type="PANTHER" id="PTHR37236">
    <property type="entry name" value="AUXIN-BINDING PROTEIN 1"/>
    <property type="match status" value="1"/>
</dbReference>
<dbReference type="PANTHER" id="PTHR37236:SF1">
    <property type="entry name" value="AUXIN-BINDING PROTEIN 1"/>
    <property type="match status" value="1"/>
</dbReference>
<dbReference type="Pfam" id="PF02041">
    <property type="entry name" value="Auxin_BP"/>
    <property type="match status" value="1"/>
</dbReference>
<dbReference type="PRINTS" id="PR00655">
    <property type="entry name" value="AUXINBINDNGP"/>
</dbReference>
<dbReference type="SUPFAM" id="SSF51182">
    <property type="entry name" value="RmlC-like cupins"/>
    <property type="match status" value="1"/>
</dbReference>
<dbReference type="PROSITE" id="PS00014">
    <property type="entry name" value="ER_TARGET"/>
    <property type="match status" value="1"/>
</dbReference>
<accession>P33490</accession>
<keyword id="KW-0927">Auxin signaling pathway</keyword>
<keyword id="KW-1015">Disulfide bond</keyword>
<keyword id="KW-0256">Endoplasmic reticulum</keyword>
<keyword id="KW-0325">Glycoprotein</keyword>
<keyword id="KW-0479">Metal-binding</keyword>
<keyword id="KW-0675">Receptor</keyword>
<keyword id="KW-1185">Reference proteome</keyword>
<keyword id="KW-0732">Signal</keyword>
<keyword id="KW-0862">Zinc</keyword>
<evidence type="ECO:0000250" key="1"/>
<evidence type="ECO:0000250" key="2">
    <source>
        <dbReference type="UniProtKB" id="P13689"/>
    </source>
</evidence>
<evidence type="ECO:0000255" key="3"/>
<feature type="signal peptide" evidence="3">
    <location>
        <begin position="1"/>
        <end position="20"/>
    </location>
</feature>
<feature type="chain" id="PRO_0000020615" description="Auxin-binding protein T85">
    <location>
        <begin position="21"/>
        <end position="187"/>
    </location>
</feature>
<feature type="short sequence motif" description="Prevents secretion from ER" evidence="3">
    <location>
        <begin position="184"/>
        <end position="187"/>
    </location>
</feature>
<feature type="binding site" evidence="2">
    <location>
        <position position="78"/>
    </location>
    <ligand>
        <name>Zn(2+)</name>
        <dbReference type="ChEBI" id="CHEBI:29105"/>
    </ligand>
</feature>
<feature type="binding site" evidence="2">
    <location>
        <position position="80"/>
    </location>
    <ligand>
        <name>Zn(2+)</name>
        <dbReference type="ChEBI" id="CHEBI:29105"/>
    </ligand>
</feature>
<feature type="binding site" evidence="2">
    <location>
        <position position="84"/>
    </location>
    <ligand>
        <name>Zn(2+)</name>
        <dbReference type="ChEBI" id="CHEBI:29105"/>
    </ligand>
</feature>
<feature type="binding site" evidence="2">
    <location>
        <position position="128"/>
    </location>
    <ligand>
        <name>Zn(2+)</name>
        <dbReference type="ChEBI" id="CHEBI:29105"/>
    </ligand>
</feature>
<feature type="glycosylation site" description="N-linked (GlcNAc...) asparagine" evidence="2">
    <location>
        <position position="117"/>
    </location>
</feature>
<feature type="disulfide bond" evidence="2">
    <location>
        <begin position="22"/>
        <end position="177"/>
    </location>
</feature>
<comment type="function">
    <text>This is probably a receptor for the plant hormone auxin.</text>
</comment>
<comment type="subunit">
    <text evidence="1">Homodimer.</text>
</comment>
<comment type="subcellular location">
    <subcellularLocation>
        <location>Endoplasmic reticulum lumen</location>
    </subcellularLocation>
</comment>
<reference key="1">
    <citation type="journal article" date="1998" name="Plant Mol. Biol.">
        <title>Cloning and expression of two genes encoding auxin-binding proteins from tobacco.</title>
        <authorList>
            <person name="Watanabe S."/>
            <person name="Shimomura S."/>
        </authorList>
    </citation>
    <scope>NUCLEOTIDE SEQUENCE [GENOMIC DNA]</scope>
    <source>
        <strain>cv. NK 326</strain>
    </source>
</reference>
<proteinExistence type="inferred from homology"/>